<accession>Q76EJ0</accession>
<accession>Q10Q00</accession>
<feature type="chain" id="PRO_0000133723" description="Protein DROOPING LEAF">
    <location>
        <begin position="1"/>
        <end position="194"/>
    </location>
</feature>
<feature type="zinc finger region" description="C4-type">
    <location>
        <begin position="15"/>
        <end position="42"/>
    </location>
</feature>
<feature type="region of interest" description="Disordered" evidence="1">
    <location>
        <begin position="83"/>
        <end position="103"/>
    </location>
</feature>
<feature type="mutagenesis site" description="In dl-4; weak drooping leaf phenotype." evidence="2">
    <original>E</original>
    <variation>K</variation>
    <location>
        <position position="118"/>
    </location>
</feature>
<dbReference type="EMBL" id="AB106553">
    <property type="protein sequence ID" value="BAD06551.1"/>
    <property type="molecule type" value="mRNA"/>
</dbReference>
<dbReference type="EMBL" id="AB106554">
    <property type="protein sequence ID" value="BAD06552.1"/>
    <property type="molecule type" value="Genomic_DNA"/>
</dbReference>
<dbReference type="EMBL" id="AY494713">
    <property type="protein sequence ID" value="AAR84663.1"/>
    <property type="molecule type" value="mRNA"/>
</dbReference>
<dbReference type="EMBL" id="DP000009">
    <property type="protein sequence ID" value="ABF94635.1"/>
    <property type="molecule type" value="Genomic_DNA"/>
</dbReference>
<dbReference type="EMBL" id="AP008209">
    <property type="protein sequence ID" value="BAF11289.1"/>
    <property type="molecule type" value="Genomic_DNA"/>
</dbReference>
<dbReference type="EMBL" id="AP014959">
    <property type="status" value="NOT_ANNOTATED_CDS"/>
    <property type="molecule type" value="Genomic_DNA"/>
</dbReference>
<dbReference type="EMBL" id="CM000140">
    <property type="status" value="NOT_ANNOTATED_CDS"/>
    <property type="molecule type" value="Genomic_DNA"/>
</dbReference>
<dbReference type="RefSeq" id="XP_015630076.1">
    <property type="nucleotide sequence ID" value="XM_015774590.1"/>
</dbReference>
<dbReference type="SMR" id="Q76EJ0"/>
<dbReference type="FunCoup" id="Q76EJ0">
    <property type="interactions" value="350"/>
</dbReference>
<dbReference type="STRING" id="39947.Q76EJ0"/>
<dbReference type="PaxDb" id="39947-Q76EJ0"/>
<dbReference type="KEGG" id="dosa:Os03g0215200"/>
<dbReference type="eggNOG" id="ENOG502QVCI">
    <property type="taxonomic scope" value="Eukaryota"/>
</dbReference>
<dbReference type="InParanoid" id="Q76EJ0"/>
<dbReference type="OrthoDB" id="667577at2759"/>
<dbReference type="PlantReactome" id="R-OSA-9609102">
    <property type="pathway name" value="Flower development"/>
</dbReference>
<dbReference type="PlantReactome" id="R-OSA-9627657">
    <property type="pathway name" value="Regulation of leaf development"/>
</dbReference>
<dbReference type="Proteomes" id="UP000000763">
    <property type="component" value="Chromosome 3"/>
</dbReference>
<dbReference type="Proteomes" id="UP000007752">
    <property type="component" value="Chromosome 3"/>
</dbReference>
<dbReference type="Proteomes" id="UP000059680">
    <property type="component" value="Chromosome 3"/>
</dbReference>
<dbReference type="GO" id="GO:0005634">
    <property type="term" value="C:nucleus"/>
    <property type="evidence" value="ECO:0000318"/>
    <property type="project" value="GO_Central"/>
</dbReference>
<dbReference type="GO" id="GO:0003677">
    <property type="term" value="F:DNA binding"/>
    <property type="evidence" value="ECO:0007669"/>
    <property type="project" value="UniProtKB-KW"/>
</dbReference>
<dbReference type="GO" id="GO:0008270">
    <property type="term" value="F:zinc ion binding"/>
    <property type="evidence" value="ECO:0007669"/>
    <property type="project" value="UniProtKB-KW"/>
</dbReference>
<dbReference type="GO" id="GO:0048440">
    <property type="term" value="P:carpel development"/>
    <property type="evidence" value="ECO:0000315"/>
    <property type="project" value="Gramene"/>
</dbReference>
<dbReference type="GO" id="GO:0045165">
    <property type="term" value="P:cell fate commitment"/>
    <property type="evidence" value="ECO:0000318"/>
    <property type="project" value="GO_Central"/>
</dbReference>
<dbReference type="GO" id="GO:0010582">
    <property type="term" value="P:floral meristem determinacy"/>
    <property type="evidence" value="ECO:0000318"/>
    <property type="project" value="GO_Central"/>
</dbReference>
<dbReference type="GO" id="GO:0048366">
    <property type="term" value="P:leaf development"/>
    <property type="evidence" value="ECO:0000315"/>
    <property type="project" value="Gramene"/>
</dbReference>
<dbReference type="GO" id="GO:0010022">
    <property type="term" value="P:meristem determinacy"/>
    <property type="evidence" value="ECO:0000315"/>
    <property type="project" value="Gramene"/>
</dbReference>
<dbReference type="GO" id="GO:0010094">
    <property type="term" value="P:specification of carpel identity"/>
    <property type="evidence" value="ECO:0000304"/>
    <property type="project" value="AgBase"/>
</dbReference>
<dbReference type="GO" id="GO:0048479">
    <property type="term" value="P:style development"/>
    <property type="evidence" value="ECO:0000318"/>
    <property type="project" value="GO_Central"/>
</dbReference>
<dbReference type="CDD" id="cd00084">
    <property type="entry name" value="HMG-box_SF"/>
    <property type="match status" value="1"/>
</dbReference>
<dbReference type="FunFam" id="1.10.30.10:FF:000039">
    <property type="entry name" value="protein CRABS CLAW isoform X3"/>
    <property type="match status" value="1"/>
</dbReference>
<dbReference type="Gene3D" id="1.10.30.10">
    <property type="entry name" value="High mobility group box domain"/>
    <property type="match status" value="1"/>
</dbReference>
<dbReference type="InterPro" id="IPR036910">
    <property type="entry name" value="HMG_box_dom_sf"/>
</dbReference>
<dbReference type="InterPro" id="IPR006780">
    <property type="entry name" value="YABBY"/>
</dbReference>
<dbReference type="InterPro" id="IPR056775">
    <property type="entry name" value="YABBY_C"/>
</dbReference>
<dbReference type="InterPro" id="IPR056776">
    <property type="entry name" value="YABBY_N"/>
</dbReference>
<dbReference type="PANTHER" id="PTHR31675:SF1">
    <property type="entry name" value="PROTEIN CRABS CLAW"/>
    <property type="match status" value="1"/>
</dbReference>
<dbReference type="PANTHER" id="PTHR31675">
    <property type="entry name" value="PROTEIN YABBY 6-RELATED"/>
    <property type="match status" value="1"/>
</dbReference>
<dbReference type="Pfam" id="PF04690">
    <property type="entry name" value="YABBY"/>
    <property type="match status" value="1"/>
</dbReference>
<dbReference type="Pfam" id="PF24868">
    <property type="entry name" value="YABBY_N"/>
    <property type="match status" value="1"/>
</dbReference>
<dbReference type="SUPFAM" id="SSF47095">
    <property type="entry name" value="HMG-box"/>
    <property type="match status" value="1"/>
</dbReference>
<proteinExistence type="evidence at protein level"/>
<gene>
    <name type="primary">DL</name>
    <name type="ordered locus">Os03g0215200</name>
    <name type="ordered locus">LOC_Os03g11600</name>
    <name type="ORF">OsJ_009541</name>
</gene>
<protein>
    <recommendedName>
        <fullName>Protein DROOPING LEAF</fullName>
    </recommendedName>
    <alternativeName>
        <fullName>Protein CRABS CLAW homolog</fullName>
        <shortName>Protein CRC homolog</shortName>
    </alternativeName>
</protein>
<keyword id="KW-0217">Developmental protein</keyword>
<keyword id="KW-0221">Differentiation</keyword>
<keyword id="KW-0238">DNA-binding</keyword>
<keyword id="KW-0287">Flowering</keyword>
<keyword id="KW-0479">Metal-binding</keyword>
<keyword id="KW-0539">Nucleus</keyword>
<keyword id="KW-1185">Reference proteome</keyword>
<keyword id="KW-0862">Zinc</keyword>
<keyword id="KW-0863">Zinc-finger</keyword>
<evidence type="ECO:0000256" key="1">
    <source>
        <dbReference type="SAM" id="MobiDB-lite"/>
    </source>
</evidence>
<evidence type="ECO:0000269" key="2">
    <source>
    </source>
</evidence>
<evidence type="ECO:0000305" key="3"/>
<sequence>MDLVSPSEHLCYVRCTYCNTVLAVGVPCKRLMDTVTVKCGHCNNLSFLSPRPPMVQPLSPTDHPLGPFQGPCTDCRRNQPLPLVSPTSNEGSPRAPFVVKPPEKKHRLPSAYNRFMREEIQRIKAAKPDIPHREAFSMAAKNWAKCDPRCSSTVSTSNSNPEPRVVAAPIPHQERANEQVVESFDIFKQMERSG</sequence>
<reference key="1">
    <citation type="journal article" date="2004" name="Plant Cell">
        <title>The YABBY gene DROOPING LEAF regulates carpel specification and midrib development in Oryza sativa.</title>
        <authorList>
            <person name="Yamaguchi T."/>
            <person name="Nagasawa N."/>
            <person name="Kawasaki S."/>
            <person name="Matsuoka M."/>
            <person name="Nagato Y."/>
            <person name="Hirano H.-Y."/>
        </authorList>
    </citation>
    <scope>NUCLEOTIDE SEQUENCE [GENOMIC DNA / MRNA]</scope>
    <scope>FUNCTION</scope>
    <scope>DEVELOPMENTAL STAGE</scope>
    <scope>MUTAGENESIS OF GLU-118</scope>
    <source>
        <strain>cv. Taichung 65</strain>
    </source>
</reference>
<reference key="2">
    <citation type="submission" date="2003-12" db="EMBL/GenBank/DDBJ databases">
        <title>DROOPING LEAF gene in rice: a homolog of Arabidopsis CRC gene containing an additional alpha-helix domain in C-terminus.</title>
        <authorList>
            <person name="Zhang H."/>
            <person name="Paek N.-C."/>
        </authorList>
    </citation>
    <scope>NUCLEOTIDE SEQUENCE [MRNA]</scope>
</reference>
<reference key="3">
    <citation type="journal article" date="2005" name="Genome Res.">
        <title>Sequence, annotation, and analysis of synteny between rice chromosome 3 and diverged grass species.</title>
        <authorList>
            <consortium name="The rice chromosome 3 sequencing consortium"/>
            <person name="Buell C.R."/>
            <person name="Yuan Q."/>
            <person name="Ouyang S."/>
            <person name="Liu J."/>
            <person name="Zhu W."/>
            <person name="Wang A."/>
            <person name="Maiti R."/>
            <person name="Haas B."/>
            <person name="Wortman J."/>
            <person name="Pertea M."/>
            <person name="Jones K.M."/>
            <person name="Kim M."/>
            <person name="Overton L."/>
            <person name="Tsitrin T."/>
            <person name="Fadrosh D."/>
            <person name="Bera J."/>
            <person name="Weaver B."/>
            <person name="Jin S."/>
            <person name="Johri S."/>
            <person name="Reardon M."/>
            <person name="Webb K."/>
            <person name="Hill J."/>
            <person name="Moffat K."/>
            <person name="Tallon L."/>
            <person name="Van Aken S."/>
            <person name="Lewis M."/>
            <person name="Utterback T."/>
            <person name="Feldblyum T."/>
            <person name="Zismann V."/>
            <person name="Iobst S."/>
            <person name="Hsiao J."/>
            <person name="de Vazeille A.R."/>
            <person name="Salzberg S.L."/>
            <person name="White O."/>
            <person name="Fraser C.M."/>
            <person name="Yu Y."/>
            <person name="Kim H."/>
            <person name="Rambo T."/>
            <person name="Currie J."/>
            <person name="Collura K."/>
            <person name="Kernodle-Thompson S."/>
            <person name="Wei F."/>
            <person name="Kudrna K."/>
            <person name="Ammiraju J.S.S."/>
            <person name="Luo M."/>
            <person name="Goicoechea J.L."/>
            <person name="Wing R.A."/>
            <person name="Henry D."/>
            <person name="Oates R."/>
            <person name="Palmer M."/>
            <person name="Pries G."/>
            <person name="Saski C."/>
            <person name="Simmons J."/>
            <person name="Soderlund C."/>
            <person name="Nelson W."/>
            <person name="de la Bastide M."/>
            <person name="Spiegel L."/>
            <person name="Nascimento L."/>
            <person name="Huang E."/>
            <person name="Preston R."/>
            <person name="Zutavern T."/>
            <person name="Palmer L."/>
            <person name="O'Shaughnessy A."/>
            <person name="Dike S."/>
            <person name="McCombie W.R."/>
            <person name="Minx P."/>
            <person name="Cordum H."/>
            <person name="Wilson R."/>
            <person name="Jin W."/>
            <person name="Lee H.R."/>
            <person name="Jiang J."/>
            <person name="Jackson S."/>
        </authorList>
    </citation>
    <scope>NUCLEOTIDE SEQUENCE [LARGE SCALE GENOMIC DNA]</scope>
    <source>
        <strain>cv. Nipponbare</strain>
    </source>
</reference>
<reference key="4">
    <citation type="journal article" date="2005" name="Nature">
        <title>The map-based sequence of the rice genome.</title>
        <authorList>
            <consortium name="International rice genome sequencing project (IRGSP)"/>
        </authorList>
    </citation>
    <scope>NUCLEOTIDE SEQUENCE [LARGE SCALE GENOMIC DNA]</scope>
    <source>
        <strain>cv. Nipponbare</strain>
    </source>
</reference>
<reference key="5">
    <citation type="journal article" date="2008" name="Nucleic Acids Res.">
        <title>The rice annotation project database (RAP-DB): 2008 update.</title>
        <authorList>
            <consortium name="The rice annotation project (RAP)"/>
        </authorList>
    </citation>
    <scope>GENOME REANNOTATION</scope>
    <source>
        <strain>cv. Nipponbare</strain>
    </source>
</reference>
<reference key="6">
    <citation type="journal article" date="2013" name="Rice">
        <title>Improvement of the Oryza sativa Nipponbare reference genome using next generation sequence and optical map data.</title>
        <authorList>
            <person name="Kawahara Y."/>
            <person name="de la Bastide M."/>
            <person name="Hamilton J.P."/>
            <person name="Kanamori H."/>
            <person name="McCombie W.R."/>
            <person name="Ouyang S."/>
            <person name="Schwartz D.C."/>
            <person name="Tanaka T."/>
            <person name="Wu J."/>
            <person name="Zhou S."/>
            <person name="Childs K.L."/>
            <person name="Davidson R.M."/>
            <person name="Lin H."/>
            <person name="Quesada-Ocampo L."/>
            <person name="Vaillancourt B."/>
            <person name="Sakai H."/>
            <person name="Lee S.S."/>
            <person name="Kim J."/>
            <person name="Numa H."/>
            <person name="Itoh T."/>
            <person name="Buell C.R."/>
            <person name="Matsumoto T."/>
        </authorList>
    </citation>
    <scope>GENOME REANNOTATION</scope>
    <source>
        <strain>cv. Nipponbare</strain>
    </source>
</reference>
<reference key="7">
    <citation type="journal article" date="2005" name="PLoS Biol.">
        <title>The genomes of Oryza sativa: a history of duplications.</title>
        <authorList>
            <person name="Yu J."/>
            <person name="Wang J."/>
            <person name="Lin W."/>
            <person name="Li S."/>
            <person name="Li H."/>
            <person name="Zhou J."/>
            <person name="Ni P."/>
            <person name="Dong W."/>
            <person name="Hu S."/>
            <person name="Zeng C."/>
            <person name="Zhang J."/>
            <person name="Zhang Y."/>
            <person name="Li R."/>
            <person name="Xu Z."/>
            <person name="Li S."/>
            <person name="Li X."/>
            <person name="Zheng H."/>
            <person name="Cong L."/>
            <person name="Lin L."/>
            <person name="Yin J."/>
            <person name="Geng J."/>
            <person name="Li G."/>
            <person name="Shi J."/>
            <person name="Liu J."/>
            <person name="Lv H."/>
            <person name="Li J."/>
            <person name="Wang J."/>
            <person name="Deng Y."/>
            <person name="Ran L."/>
            <person name="Shi X."/>
            <person name="Wang X."/>
            <person name="Wu Q."/>
            <person name="Li C."/>
            <person name="Ren X."/>
            <person name="Wang J."/>
            <person name="Wang X."/>
            <person name="Li D."/>
            <person name="Liu D."/>
            <person name="Zhang X."/>
            <person name="Ji Z."/>
            <person name="Zhao W."/>
            <person name="Sun Y."/>
            <person name="Zhang Z."/>
            <person name="Bao J."/>
            <person name="Han Y."/>
            <person name="Dong L."/>
            <person name="Ji J."/>
            <person name="Chen P."/>
            <person name="Wu S."/>
            <person name="Liu J."/>
            <person name="Xiao Y."/>
            <person name="Bu D."/>
            <person name="Tan J."/>
            <person name="Yang L."/>
            <person name="Ye C."/>
            <person name="Zhang J."/>
            <person name="Xu J."/>
            <person name="Zhou Y."/>
            <person name="Yu Y."/>
            <person name="Zhang B."/>
            <person name="Zhuang S."/>
            <person name="Wei H."/>
            <person name="Liu B."/>
            <person name="Lei M."/>
            <person name="Yu H."/>
            <person name="Li Y."/>
            <person name="Xu H."/>
            <person name="Wei S."/>
            <person name="He X."/>
            <person name="Fang L."/>
            <person name="Zhang Z."/>
            <person name="Zhang Y."/>
            <person name="Huang X."/>
            <person name="Su Z."/>
            <person name="Tong W."/>
            <person name="Li J."/>
            <person name="Tong Z."/>
            <person name="Li S."/>
            <person name="Ye J."/>
            <person name="Wang L."/>
            <person name="Fang L."/>
            <person name="Lei T."/>
            <person name="Chen C.-S."/>
            <person name="Chen H.-C."/>
            <person name="Xu Z."/>
            <person name="Li H."/>
            <person name="Huang H."/>
            <person name="Zhang F."/>
            <person name="Xu H."/>
            <person name="Li N."/>
            <person name="Zhao C."/>
            <person name="Li S."/>
            <person name="Dong L."/>
            <person name="Huang Y."/>
            <person name="Li L."/>
            <person name="Xi Y."/>
            <person name="Qi Q."/>
            <person name="Li W."/>
            <person name="Zhang B."/>
            <person name="Hu W."/>
            <person name="Zhang Y."/>
            <person name="Tian X."/>
            <person name="Jiao Y."/>
            <person name="Liang X."/>
            <person name="Jin J."/>
            <person name="Gao L."/>
            <person name="Zheng W."/>
            <person name="Hao B."/>
            <person name="Liu S.-M."/>
            <person name="Wang W."/>
            <person name="Yuan L."/>
            <person name="Cao M."/>
            <person name="McDermott J."/>
            <person name="Samudrala R."/>
            <person name="Wang J."/>
            <person name="Wong G.K.-S."/>
            <person name="Yang H."/>
        </authorList>
    </citation>
    <scope>NUCLEOTIDE SEQUENCE [LARGE SCALE GENOMIC DNA]</scope>
    <source>
        <strain>cv. Nipponbare</strain>
    </source>
</reference>
<reference key="8">
    <citation type="journal article" date="2003" name="Development">
        <title>SUPERWOMAN1 and DROOPING LEAF genes control floral organ identity in rice.</title>
        <authorList>
            <person name="Nagasawa N."/>
            <person name="Miyoshi M."/>
            <person name="Sano Y."/>
            <person name="Satoh H."/>
            <person name="Hirano H.-Y."/>
            <person name="Sakai H."/>
            <person name="Nagato Y."/>
        </authorList>
    </citation>
    <scope>IDENTIFICATION OF DROOPING LEAF PHENOTYPE</scope>
    <source>
        <strain>cv. Taichung 65</strain>
    </source>
</reference>
<reference key="9">
    <citation type="journal article" date="2007" name="Mol. Genet. Genomics">
        <title>Molecular characterization the YABBY gene family in Oryza sativa and expression analysis of OsYABBY1.</title>
        <authorList>
            <person name="Toriba T."/>
            <person name="Harada K."/>
            <person name="Takamura A."/>
            <person name="Nakamura H."/>
            <person name="Ichikawa H."/>
            <person name="Suzaki T."/>
            <person name="Hirano H.-Y."/>
        </authorList>
    </citation>
    <scope>GENE FAMILY</scope>
    <scope>NOMENCLATURE</scope>
</reference>
<organism>
    <name type="scientific">Oryza sativa subsp. japonica</name>
    <name type="common">Rice</name>
    <dbReference type="NCBI Taxonomy" id="39947"/>
    <lineage>
        <taxon>Eukaryota</taxon>
        <taxon>Viridiplantae</taxon>
        <taxon>Streptophyta</taxon>
        <taxon>Embryophyta</taxon>
        <taxon>Tracheophyta</taxon>
        <taxon>Spermatophyta</taxon>
        <taxon>Magnoliopsida</taxon>
        <taxon>Liliopsida</taxon>
        <taxon>Poales</taxon>
        <taxon>Poaceae</taxon>
        <taxon>BOP clade</taxon>
        <taxon>Oryzoideae</taxon>
        <taxon>Oryzeae</taxon>
        <taxon>Oryzinae</taxon>
        <taxon>Oryza</taxon>
        <taxon>Oryza sativa</taxon>
    </lineage>
</organism>
<comment type="function">
    <text evidence="2">Regulates carpel specification in flower development. Severe or intermediate mutation in DL causes complete or partial homeotic conversion of carpels into stamens without affecting the identities of other floral organs. Interacts antagonistically with class B genes and controls floral meristem determinacy. Regulates midrib formation in leaves probably by inducing cell proliferation in the central region of the leaf.</text>
</comment>
<comment type="subcellular location">
    <subcellularLocation>
        <location evidence="3">Nucleus</location>
    </subcellularLocation>
</comment>
<comment type="developmental stage">
    <text evidence="2">Detected during flower and leaf development. Expression in the flower meristem in the early stage of flower development. When carpel primordia begin to form, specific and uniform expression in carpel primordia. Expression in the central region of the leaf plastochron 1 (P1) primordia. Detected up to P4 stage, hardly detected in the P5 leaves.</text>
</comment>
<comment type="similarity">
    <text evidence="3">Belongs to the YABBY family.</text>
</comment>
<name>YABDL_ORYSJ</name>